<organism>
    <name type="scientific">Endomicrobium trichonymphae</name>
    <dbReference type="NCBI Taxonomy" id="1408204"/>
    <lineage>
        <taxon>Bacteria</taxon>
        <taxon>Pseudomonadati</taxon>
        <taxon>Elusimicrobiota</taxon>
        <taxon>Endomicrobiia</taxon>
        <taxon>Endomicrobiales</taxon>
        <taxon>Endomicrobiaceae</taxon>
        <taxon>Candidatus Endomicrobiellum</taxon>
    </lineage>
</organism>
<proteinExistence type="inferred from homology"/>
<protein>
    <recommendedName>
        <fullName evidence="1">Small ribosomal subunit protein bS16</fullName>
    </recommendedName>
    <alternativeName>
        <fullName evidence="2">30S ribosomal protein S16</fullName>
    </alternativeName>
</protein>
<reference key="1">
    <citation type="journal article" date="2008" name="Proc. Natl. Acad. Sci. U.S.A.">
        <title>Complete genome of the uncultured termite group 1 bacteria in a single host protist cell.</title>
        <authorList>
            <person name="Hongoh Y."/>
            <person name="Sharma V.K."/>
            <person name="Prakash T."/>
            <person name="Noda S."/>
            <person name="Taylor T.D."/>
            <person name="Kudo T."/>
            <person name="Sakaki Y."/>
            <person name="Toyoda A."/>
            <person name="Hattori M."/>
            <person name="Ohkuma M."/>
        </authorList>
    </citation>
    <scope>NUCLEOTIDE SEQUENCE [LARGE SCALE GENOMIC DNA]</scope>
</reference>
<name>RS16_ENDTX</name>
<dbReference type="EMBL" id="AP009510">
    <property type="protein sequence ID" value="BAG13505.1"/>
    <property type="molecule type" value="Genomic_DNA"/>
</dbReference>
<dbReference type="RefSeq" id="WP_015423034.1">
    <property type="nucleotide sequence ID" value="NC_020419.1"/>
</dbReference>
<dbReference type="SMR" id="B1GZ23"/>
<dbReference type="STRING" id="471821.TGRD_022"/>
<dbReference type="KEGG" id="rsd:TGRD_022"/>
<dbReference type="HOGENOM" id="CLU_100590_5_2_0"/>
<dbReference type="Proteomes" id="UP000001691">
    <property type="component" value="Chromosome"/>
</dbReference>
<dbReference type="GO" id="GO:0005737">
    <property type="term" value="C:cytoplasm"/>
    <property type="evidence" value="ECO:0007669"/>
    <property type="project" value="UniProtKB-ARBA"/>
</dbReference>
<dbReference type="GO" id="GO:0015935">
    <property type="term" value="C:small ribosomal subunit"/>
    <property type="evidence" value="ECO:0007669"/>
    <property type="project" value="TreeGrafter"/>
</dbReference>
<dbReference type="GO" id="GO:0003735">
    <property type="term" value="F:structural constituent of ribosome"/>
    <property type="evidence" value="ECO:0007669"/>
    <property type="project" value="InterPro"/>
</dbReference>
<dbReference type="GO" id="GO:0006412">
    <property type="term" value="P:translation"/>
    <property type="evidence" value="ECO:0007669"/>
    <property type="project" value="UniProtKB-UniRule"/>
</dbReference>
<dbReference type="Gene3D" id="3.30.1320.10">
    <property type="match status" value="1"/>
</dbReference>
<dbReference type="HAMAP" id="MF_00385">
    <property type="entry name" value="Ribosomal_bS16"/>
    <property type="match status" value="1"/>
</dbReference>
<dbReference type="InterPro" id="IPR000307">
    <property type="entry name" value="Ribosomal_bS16"/>
</dbReference>
<dbReference type="InterPro" id="IPR023803">
    <property type="entry name" value="Ribosomal_bS16_dom_sf"/>
</dbReference>
<dbReference type="NCBIfam" id="TIGR00002">
    <property type="entry name" value="S16"/>
    <property type="match status" value="1"/>
</dbReference>
<dbReference type="PANTHER" id="PTHR12919">
    <property type="entry name" value="30S RIBOSOMAL PROTEIN S16"/>
    <property type="match status" value="1"/>
</dbReference>
<dbReference type="PANTHER" id="PTHR12919:SF20">
    <property type="entry name" value="SMALL RIBOSOMAL SUBUNIT PROTEIN BS16M"/>
    <property type="match status" value="1"/>
</dbReference>
<dbReference type="Pfam" id="PF00886">
    <property type="entry name" value="Ribosomal_S16"/>
    <property type="match status" value="1"/>
</dbReference>
<dbReference type="SUPFAM" id="SSF54565">
    <property type="entry name" value="Ribosomal protein S16"/>
    <property type="match status" value="1"/>
</dbReference>
<feature type="chain" id="PRO_1000122594" description="Small ribosomal subunit protein bS16">
    <location>
        <begin position="1"/>
        <end position="84"/>
    </location>
</feature>
<accession>B1GZ23</accession>
<gene>
    <name evidence="1" type="primary">rpsP</name>
    <name type="ordered locus">TGRD_022</name>
</gene>
<comment type="similarity">
    <text evidence="1">Belongs to the bacterial ribosomal protein bS16 family.</text>
</comment>
<keyword id="KW-0687">Ribonucleoprotein</keyword>
<keyword id="KW-0689">Ribosomal protein</keyword>
<sequence length="84" mass="9737">MAVRLRLQRRGKPKRPYYRVVAIDQRAKRDGEPIEILGQYDPIAEDNKFKVNIERINYWLGIGAKASETVAALIKKNQTVEIKQ</sequence>
<evidence type="ECO:0000255" key="1">
    <source>
        <dbReference type="HAMAP-Rule" id="MF_00385"/>
    </source>
</evidence>
<evidence type="ECO:0000305" key="2"/>